<dbReference type="EC" id="6.3.4.13" evidence="2"/>
<dbReference type="EMBL" id="AL591688">
    <property type="protein sequence ID" value="CAC45430.1"/>
    <property type="molecule type" value="Genomic_DNA"/>
</dbReference>
<dbReference type="RefSeq" id="NP_384964.1">
    <property type="nucleotide sequence ID" value="NC_003047.1"/>
</dbReference>
<dbReference type="RefSeq" id="WP_010968869.1">
    <property type="nucleotide sequence ID" value="NC_003047.1"/>
</dbReference>
<dbReference type="SMR" id="Q92RL0"/>
<dbReference type="EnsemblBacteria" id="CAC45430">
    <property type="protein sequence ID" value="CAC45430"/>
    <property type="gene ID" value="SMc00993"/>
</dbReference>
<dbReference type="KEGG" id="sme:SMc00993"/>
<dbReference type="PATRIC" id="fig|266834.11.peg.2251"/>
<dbReference type="eggNOG" id="COG0151">
    <property type="taxonomic scope" value="Bacteria"/>
</dbReference>
<dbReference type="HOGENOM" id="CLU_027420_3_1_5"/>
<dbReference type="OrthoDB" id="9807240at2"/>
<dbReference type="UniPathway" id="UPA00074">
    <property type="reaction ID" value="UER00125"/>
</dbReference>
<dbReference type="Proteomes" id="UP000001976">
    <property type="component" value="Chromosome"/>
</dbReference>
<dbReference type="GO" id="GO:0005524">
    <property type="term" value="F:ATP binding"/>
    <property type="evidence" value="ECO:0007669"/>
    <property type="project" value="UniProtKB-KW"/>
</dbReference>
<dbReference type="GO" id="GO:0046872">
    <property type="term" value="F:metal ion binding"/>
    <property type="evidence" value="ECO:0007669"/>
    <property type="project" value="UniProtKB-KW"/>
</dbReference>
<dbReference type="GO" id="GO:0004637">
    <property type="term" value="F:phosphoribosylamine-glycine ligase activity"/>
    <property type="evidence" value="ECO:0007669"/>
    <property type="project" value="UniProtKB-UniRule"/>
</dbReference>
<dbReference type="GO" id="GO:0006189">
    <property type="term" value="P:'de novo' IMP biosynthetic process"/>
    <property type="evidence" value="ECO:0007669"/>
    <property type="project" value="UniProtKB-UniRule"/>
</dbReference>
<dbReference type="GO" id="GO:0009113">
    <property type="term" value="P:purine nucleobase biosynthetic process"/>
    <property type="evidence" value="ECO:0007669"/>
    <property type="project" value="InterPro"/>
</dbReference>
<dbReference type="FunFam" id="3.30.470.20:FF:000031">
    <property type="entry name" value="Phosphoribosylamine--glycine ligase"/>
    <property type="match status" value="1"/>
</dbReference>
<dbReference type="FunFam" id="3.40.50.20:FF:000006">
    <property type="entry name" value="Phosphoribosylamine--glycine ligase, chloroplastic"/>
    <property type="match status" value="1"/>
</dbReference>
<dbReference type="FunFam" id="3.90.600.10:FF:000001">
    <property type="entry name" value="Trifunctional purine biosynthetic protein adenosine-3"/>
    <property type="match status" value="1"/>
</dbReference>
<dbReference type="Gene3D" id="3.40.50.20">
    <property type="match status" value="1"/>
</dbReference>
<dbReference type="Gene3D" id="3.30.1490.20">
    <property type="entry name" value="ATP-grasp fold, A domain"/>
    <property type="match status" value="1"/>
</dbReference>
<dbReference type="Gene3D" id="3.30.470.20">
    <property type="entry name" value="ATP-grasp fold, B domain"/>
    <property type="match status" value="1"/>
</dbReference>
<dbReference type="Gene3D" id="3.90.600.10">
    <property type="entry name" value="Phosphoribosylglycinamide synthetase, C-terminal domain"/>
    <property type="match status" value="1"/>
</dbReference>
<dbReference type="HAMAP" id="MF_00138">
    <property type="entry name" value="GARS"/>
    <property type="match status" value="1"/>
</dbReference>
<dbReference type="InterPro" id="IPR011761">
    <property type="entry name" value="ATP-grasp"/>
</dbReference>
<dbReference type="InterPro" id="IPR013815">
    <property type="entry name" value="ATP_grasp_subdomain_1"/>
</dbReference>
<dbReference type="InterPro" id="IPR016185">
    <property type="entry name" value="PreATP-grasp_dom_sf"/>
</dbReference>
<dbReference type="InterPro" id="IPR020561">
    <property type="entry name" value="PRibGlycinamid_synth_ATP-grasp"/>
</dbReference>
<dbReference type="InterPro" id="IPR000115">
    <property type="entry name" value="PRibGlycinamide_synth"/>
</dbReference>
<dbReference type="InterPro" id="IPR020560">
    <property type="entry name" value="PRibGlycinamide_synth_C-dom"/>
</dbReference>
<dbReference type="InterPro" id="IPR037123">
    <property type="entry name" value="PRibGlycinamide_synth_C_sf"/>
</dbReference>
<dbReference type="InterPro" id="IPR020559">
    <property type="entry name" value="PRibGlycinamide_synth_CS"/>
</dbReference>
<dbReference type="InterPro" id="IPR020562">
    <property type="entry name" value="PRibGlycinamide_synth_N"/>
</dbReference>
<dbReference type="InterPro" id="IPR011054">
    <property type="entry name" value="Rudment_hybrid_motif"/>
</dbReference>
<dbReference type="NCBIfam" id="TIGR00877">
    <property type="entry name" value="purD"/>
    <property type="match status" value="1"/>
</dbReference>
<dbReference type="PANTHER" id="PTHR43472">
    <property type="entry name" value="PHOSPHORIBOSYLAMINE--GLYCINE LIGASE"/>
    <property type="match status" value="1"/>
</dbReference>
<dbReference type="PANTHER" id="PTHR43472:SF1">
    <property type="entry name" value="PHOSPHORIBOSYLAMINE--GLYCINE LIGASE, CHLOROPLASTIC"/>
    <property type="match status" value="1"/>
</dbReference>
<dbReference type="Pfam" id="PF01071">
    <property type="entry name" value="GARS_A"/>
    <property type="match status" value="1"/>
</dbReference>
<dbReference type="Pfam" id="PF02843">
    <property type="entry name" value="GARS_C"/>
    <property type="match status" value="1"/>
</dbReference>
<dbReference type="Pfam" id="PF02844">
    <property type="entry name" value="GARS_N"/>
    <property type="match status" value="1"/>
</dbReference>
<dbReference type="SMART" id="SM01209">
    <property type="entry name" value="GARS_A"/>
    <property type="match status" value="1"/>
</dbReference>
<dbReference type="SMART" id="SM01210">
    <property type="entry name" value="GARS_C"/>
    <property type="match status" value="1"/>
</dbReference>
<dbReference type="SUPFAM" id="SSF56059">
    <property type="entry name" value="Glutathione synthetase ATP-binding domain-like"/>
    <property type="match status" value="1"/>
</dbReference>
<dbReference type="SUPFAM" id="SSF52440">
    <property type="entry name" value="PreATP-grasp domain"/>
    <property type="match status" value="1"/>
</dbReference>
<dbReference type="SUPFAM" id="SSF51246">
    <property type="entry name" value="Rudiment single hybrid motif"/>
    <property type="match status" value="1"/>
</dbReference>
<dbReference type="PROSITE" id="PS50975">
    <property type="entry name" value="ATP_GRASP"/>
    <property type="match status" value="1"/>
</dbReference>
<dbReference type="PROSITE" id="PS00184">
    <property type="entry name" value="GARS"/>
    <property type="match status" value="1"/>
</dbReference>
<feature type="chain" id="PRO_0000151474" description="Phosphoribosylamine--glycine ligase">
    <location>
        <begin position="1"/>
        <end position="423"/>
    </location>
</feature>
<feature type="domain" description="ATP-grasp" evidence="2">
    <location>
        <begin position="107"/>
        <end position="312"/>
    </location>
</feature>
<feature type="binding site" evidence="2">
    <location>
        <begin position="133"/>
        <end position="193"/>
    </location>
    <ligand>
        <name>ATP</name>
        <dbReference type="ChEBI" id="CHEBI:30616"/>
    </ligand>
</feature>
<feature type="binding site" evidence="2">
    <location>
        <position position="282"/>
    </location>
    <ligand>
        <name>Mg(2+)</name>
        <dbReference type="ChEBI" id="CHEBI:18420"/>
    </ligand>
</feature>
<feature type="binding site" evidence="2">
    <location>
        <position position="284"/>
    </location>
    <ligand>
        <name>Mg(2+)</name>
        <dbReference type="ChEBI" id="CHEBI:18420"/>
    </ligand>
</feature>
<proteinExistence type="inferred from homology"/>
<keyword id="KW-0067">ATP-binding</keyword>
<keyword id="KW-0436">Ligase</keyword>
<keyword id="KW-0460">Magnesium</keyword>
<keyword id="KW-0464">Manganese</keyword>
<keyword id="KW-0479">Metal-binding</keyword>
<keyword id="KW-0547">Nucleotide-binding</keyword>
<keyword id="KW-0658">Purine biosynthesis</keyword>
<keyword id="KW-1185">Reference proteome</keyword>
<protein>
    <recommendedName>
        <fullName evidence="2">Phosphoribosylamine--glycine ligase</fullName>
        <ecNumber evidence="2">6.3.4.13</ecNumber>
    </recommendedName>
    <alternativeName>
        <fullName evidence="2">GARS</fullName>
    </alternativeName>
    <alternativeName>
        <fullName evidence="2">Glycinamide ribonucleotide synthetase</fullName>
    </alternativeName>
    <alternativeName>
        <fullName evidence="2">Phosphoribosylglycinamide synthetase</fullName>
    </alternativeName>
</protein>
<accession>Q92RL0</accession>
<gene>
    <name evidence="2" type="primary">purD</name>
    <name type="ordered locus">R00858</name>
    <name type="ORF">SMc00993</name>
</gene>
<comment type="catalytic activity">
    <reaction evidence="2">
        <text>5-phospho-beta-D-ribosylamine + glycine + ATP = N(1)-(5-phospho-beta-D-ribosyl)glycinamide + ADP + phosphate + H(+)</text>
        <dbReference type="Rhea" id="RHEA:17453"/>
        <dbReference type="ChEBI" id="CHEBI:15378"/>
        <dbReference type="ChEBI" id="CHEBI:30616"/>
        <dbReference type="ChEBI" id="CHEBI:43474"/>
        <dbReference type="ChEBI" id="CHEBI:57305"/>
        <dbReference type="ChEBI" id="CHEBI:58681"/>
        <dbReference type="ChEBI" id="CHEBI:143788"/>
        <dbReference type="ChEBI" id="CHEBI:456216"/>
        <dbReference type="EC" id="6.3.4.13"/>
    </reaction>
</comment>
<comment type="cofactor">
    <cofactor evidence="1">
        <name>Mg(2+)</name>
        <dbReference type="ChEBI" id="CHEBI:18420"/>
    </cofactor>
    <cofactor evidence="1">
        <name>Mn(2+)</name>
        <dbReference type="ChEBI" id="CHEBI:29035"/>
    </cofactor>
    <text evidence="1">Binds 1 Mg(2+) or Mn(2+) ion per subunit.</text>
</comment>
<comment type="pathway">
    <text evidence="2">Purine metabolism; IMP biosynthesis via de novo pathway; N(1)-(5-phospho-D-ribosyl)glycinamide from 5-phospho-alpha-D-ribose 1-diphosphate: step 2/2.</text>
</comment>
<comment type="similarity">
    <text evidence="2">Belongs to the GARS family.</text>
</comment>
<evidence type="ECO:0000250" key="1"/>
<evidence type="ECO:0000255" key="2">
    <source>
        <dbReference type="HAMAP-Rule" id="MF_00138"/>
    </source>
</evidence>
<organism>
    <name type="scientific">Rhizobium meliloti (strain 1021)</name>
    <name type="common">Ensifer meliloti</name>
    <name type="synonym">Sinorhizobium meliloti</name>
    <dbReference type="NCBI Taxonomy" id="266834"/>
    <lineage>
        <taxon>Bacteria</taxon>
        <taxon>Pseudomonadati</taxon>
        <taxon>Pseudomonadota</taxon>
        <taxon>Alphaproteobacteria</taxon>
        <taxon>Hyphomicrobiales</taxon>
        <taxon>Rhizobiaceae</taxon>
        <taxon>Sinorhizobium/Ensifer group</taxon>
        <taxon>Sinorhizobium</taxon>
    </lineage>
</organism>
<reference key="1">
    <citation type="journal article" date="2001" name="Proc. Natl. Acad. Sci. U.S.A.">
        <title>Analysis of the chromosome sequence of the legume symbiont Sinorhizobium meliloti strain 1021.</title>
        <authorList>
            <person name="Capela D."/>
            <person name="Barloy-Hubler F."/>
            <person name="Gouzy J."/>
            <person name="Bothe G."/>
            <person name="Ampe F."/>
            <person name="Batut J."/>
            <person name="Boistard P."/>
            <person name="Becker A."/>
            <person name="Boutry M."/>
            <person name="Cadieu E."/>
            <person name="Dreano S."/>
            <person name="Gloux S."/>
            <person name="Godrie T."/>
            <person name="Goffeau A."/>
            <person name="Kahn D."/>
            <person name="Kiss E."/>
            <person name="Lelaure V."/>
            <person name="Masuy D."/>
            <person name="Pohl T."/>
            <person name="Portetelle D."/>
            <person name="Puehler A."/>
            <person name="Purnelle B."/>
            <person name="Ramsperger U."/>
            <person name="Renard C."/>
            <person name="Thebault P."/>
            <person name="Vandenbol M."/>
            <person name="Weidner S."/>
            <person name="Galibert F."/>
        </authorList>
    </citation>
    <scope>NUCLEOTIDE SEQUENCE [LARGE SCALE GENOMIC DNA]</scope>
    <source>
        <strain>1021</strain>
    </source>
</reference>
<reference key="2">
    <citation type="journal article" date="2001" name="Science">
        <title>The composite genome of the legume symbiont Sinorhizobium meliloti.</title>
        <authorList>
            <person name="Galibert F."/>
            <person name="Finan T.M."/>
            <person name="Long S.R."/>
            <person name="Puehler A."/>
            <person name="Abola P."/>
            <person name="Ampe F."/>
            <person name="Barloy-Hubler F."/>
            <person name="Barnett M.J."/>
            <person name="Becker A."/>
            <person name="Boistard P."/>
            <person name="Bothe G."/>
            <person name="Boutry M."/>
            <person name="Bowser L."/>
            <person name="Buhrmester J."/>
            <person name="Cadieu E."/>
            <person name="Capela D."/>
            <person name="Chain P."/>
            <person name="Cowie A."/>
            <person name="Davis R.W."/>
            <person name="Dreano S."/>
            <person name="Federspiel N.A."/>
            <person name="Fisher R.F."/>
            <person name="Gloux S."/>
            <person name="Godrie T."/>
            <person name="Goffeau A."/>
            <person name="Golding B."/>
            <person name="Gouzy J."/>
            <person name="Gurjal M."/>
            <person name="Hernandez-Lucas I."/>
            <person name="Hong A."/>
            <person name="Huizar L."/>
            <person name="Hyman R.W."/>
            <person name="Jones T."/>
            <person name="Kahn D."/>
            <person name="Kahn M.L."/>
            <person name="Kalman S."/>
            <person name="Keating D.H."/>
            <person name="Kiss E."/>
            <person name="Komp C."/>
            <person name="Lelaure V."/>
            <person name="Masuy D."/>
            <person name="Palm C."/>
            <person name="Peck M.C."/>
            <person name="Pohl T.M."/>
            <person name="Portetelle D."/>
            <person name="Purnelle B."/>
            <person name="Ramsperger U."/>
            <person name="Surzycki R."/>
            <person name="Thebault P."/>
            <person name="Vandenbol M."/>
            <person name="Vorhoelter F.J."/>
            <person name="Weidner S."/>
            <person name="Wells D.H."/>
            <person name="Wong K."/>
            <person name="Yeh K.-C."/>
            <person name="Batut J."/>
        </authorList>
    </citation>
    <scope>NUCLEOTIDE SEQUENCE [LARGE SCALE GENOMIC DNA]</scope>
    <source>
        <strain>1021</strain>
    </source>
</reference>
<sequence length="423" mass="44324">MKVLLIGSGGREHALAWKIAQSPRLTKLYAAPGNPGIAEEAAIVDLHTENHEDVVDFCRTHAIDFVVVGPEAPLVAGLGDVLRAADIPTFGPSAAAAQLEGSKGFTKDLCARYGIPTGAYRRFTDAEPAKAYIREEGAPIVIKADGLAAGKGVTVAMSLDEAFAAVDECFAGAFGAAGAEVVVEAYLDGEEASFFCLCDGKSVLPLASAQDHKRVGDGDTGPNTGGMGAYSPAPVMTAEMVERTMKEIIEPTVRGMAESGYPFTGVFFAGLMITEKGPELIEYNVRFGDPECQVLMMRLESDLLPLLYAAATGTLEGMKAEWRDEAALTVVMASRGYPGAYEKDTPIAALPDASAATKVFHAGTAMKGGGLVAAGGRVLNVTATGKTVGEAKDAAYAAVRDVSWENGFYRNDIGWRAVARETA</sequence>
<name>PUR2_RHIME</name>